<reference key="1">
    <citation type="journal article" date="2007" name="J. Bacteriol.">
        <title>The complete genome sequence of the lactic acid bacterial paradigm Lactococcus lactis subsp. cremoris MG1363.</title>
        <authorList>
            <person name="Wegmann U."/>
            <person name="O'Connell-Motherway M."/>
            <person name="Zomer A."/>
            <person name="Buist G."/>
            <person name="Shearman C."/>
            <person name="Canchaya C."/>
            <person name="Ventura M."/>
            <person name="Goesmann A."/>
            <person name="Gasson M.J."/>
            <person name="Kuipers O.P."/>
            <person name="van Sinderen D."/>
            <person name="Kok J."/>
        </authorList>
    </citation>
    <scope>NUCLEOTIDE SEQUENCE [LARGE SCALE GENOMIC DNA]</scope>
    <source>
        <strain>MG1363</strain>
    </source>
</reference>
<proteinExistence type="inferred from homology"/>
<organism>
    <name type="scientific">Lactococcus lactis subsp. cremoris (strain MG1363)</name>
    <dbReference type="NCBI Taxonomy" id="416870"/>
    <lineage>
        <taxon>Bacteria</taxon>
        <taxon>Bacillati</taxon>
        <taxon>Bacillota</taxon>
        <taxon>Bacilli</taxon>
        <taxon>Lactobacillales</taxon>
        <taxon>Streptococcaceae</taxon>
        <taxon>Lactococcus</taxon>
        <taxon>Lactococcus cremoris subsp. cremoris</taxon>
    </lineage>
</organism>
<protein>
    <recommendedName>
        <fullName evidence="1">Ribosome maturation factor RimM</fullName>
    </recommendedName>
</protein>
<keyword id="KW-0143">Chaperone</keyword>
<keyword id="KW-0963">Cytoplasm</keyword>
<keyword id="KW-0690">Ribosome biogenesis</keyword>
<keyword id="KW-0698">rRNA processing</keyword>
<evidence type="ECO:0000255" key="1">
    <source>
        <dbReference type="HAMAP-Rule" id="MF_00014"/>
    </source>
</evidence>
<accession>A2RJS5</accession>
<sequence length="171" mass="19649">MENFYKVGTIVNTQGLQGEVRILPSTDFANERFSKGAVLALFDDKDNYIQDLKVKSGRLQKNFYVVKFEGFYHINDVEKYKGYVVKIAQENQEELNDGEFYYHEIIGSDVYDNDILIGQISEILQPGANDVWVVKRKGKRDLLLPYIPPVVLKVDVAQHRVDVDIMEGLDD</sequence>
<feature type="chain" id="PRO_1000001186" description="Ribosome maturation factor RimM">
    <location>
        <begin position="1"/>
        <end position="171"/>
    </location>
</feature>
<feature type="domain" description="PRC barrel" evidence="1">
    <location>
        <begin position="97"/>
        <end position="169"/>
    </location>
</feature>
<gene>
    <name evidence="1" type="primary">rimM</name>
    <name type="ordered locus">llmg_0936</name>
</gene>
<comment type="function">
    <text evidence="1">An accessory protein needed during the final step in the assembly of 30S ribosomal subunit, possibly for assembly of the head region. Essential for efficient processing of 16S rRNA. May be needed both before and after RbfA during the maturation of 16S rRNA. It has affinity for free ribosomal 30S subunits but not for 70S ribosomes.</text>
</comment>
<comment type="subunit">
    <text evidence="1">Binds ribosomal protein uS19.</text>
</comment>
<comment type="subcellular location">
    <subcellularLocation>
        <location evidence="1">Cytoplasm</location>
    </subcellularLocation>
</comment>
<comment type="domain">
    <text evidence="1">The PRC barrel domain binds ribosomal protein uS19.</text>
</comment>
<comment type="similarity">
    <text evidence="1">Belongs to the RimM family.</text>
</comment>
<name>RIMM_LACLM</name>
<dbReference type="EMBL" id="AM406671">
    <property type="protein sequence ID" value="CAL97530.1"/>
    <property type="molecule type" value="Genomic_DNA"/>
</dbReference>
<dbReference type="RefSeq" id="WP_011834881.1">
    <property type="nucleotide sequence ID" value="NC_009004.1"/>
</dbReference>
<dbReference type="SMR" id="A2RJS5"/>
<dbReference type="STRING" id="416870.llmg_0936"/>
<dbReference type="KEGG" id="llm:llmg_0936"/>
<dbReference type="eggNOG" id="COG0806">
    <property type="taxonomic scope" value="Bacteria"/>
</dbReference>
<dbReference type="HOGENOM" id="CLU_077636_3_1_9"/>
<dbReference type="OrthoDB" id="9810331at2"/>
<dbReference type="PhylomeDB" id="A2RJS5"/>
<dbReference type="Proteomes" id="UP000000364">
    <property type="component" value="Chromosome"/>
</dbReference>
<dbReference type="GO" id="GO:0005737">
    <property type="term" value="C:cytoplasm"/>
    <property type="evidence" value="ECO:0007669"/>
    <property type="project" value="UniProtKB-SubCell"/>
</dbReference>
<dbReference type="GO" id="GO:0005840">
    <property type="term" value="C:ribosome"/>
    <property type="evidence" value="ECO:0007669"/>
    <property type="project" value="InterPro"/>
</dbReference>
<dbReference type="GO" id="GO:0043022">
    <property type="term" value="F:ribosome binding"/>
    <property type="evidence" value="ECO:0007669"/>
    <property type="project" value="InterPro"/>
</dbReference>
<dbReference type="GO" id="GO:0042274">
    <property type="term" value="P:ribosomal small subunit biogenesis"/>
    <property type="evidence" value="ECO:0007669"/>
    <property type="project" value="UniProtKB-UniRule"/>
</dbReference>
<dbReference type="GO" id="GO:0006364">
    <property type="term" value="P:rRNA processing"/>
    <property type="evidence" value="ECO:0007669"/>
    <property type="project" value="UniProtKB-UniRule"/>
</dbReference>
<dbReference type="Gene3D" id="2.30.30.240">
    <property type="entry name" value="PRC-barrel domain"/>
    <property type="match status" value="1"/>
</dbReference>
<dbReference type="Gene3D" id="2.40.30.60">
    <property type="entry name" value="RimM"/>
    <property type="match status" value="1"/>
</dbReference>
<dbReference type="HAMAP" id="MF_00014">
    <property type="entry name" value="Ribosome_mat_RimM"/>
    <property type="match status" value="1"/>
</dbReference>
<dbReference type="InterPro" id="IPR027275">
    <property type="entry name" value="PRC-brl_dom"/>
</dbReference>
<dbReference type="InterPro" id="IPR011033">
    <property type="entry name" value="PRC_barrel-like_sf"/>
</dbReference>
<dbReference type="InterPro" id="IPR011961">
    <property type="entry name" value="RimM"/>
</dbReference>
<dbReference type="InterPro" id="IPR002676">
    <property type="entry name" value="RimM_N"/>
</dbReference>
<dbReference type="InterPro" id="IPR036976">
    <property type="entry name" value="RimM_N_sf"/>
</dbReference>
<dbReference type="InterPro" id="IPR009000">
    <property type="entry name" value="Transl_B-barrel_sf"/>
</dbReference>
<dbReference type="NCBIfam" id="TIGR02273">
    <property type="entry name" value="16S_RimM"/>
    <property type="match status" value="1"/>
</dbReference>
<dbReference type="PANTHER" id="PTHR33692">
    <property type="entry name" value="RIBOSOME MATURATION FACTOR RIMM"/>
    <property type="match status" value="1"/>
</dbReference>
<dbReference type="PANTHER" id="PTHR33692:SF1">
    <property type="entry name" value="RIBOSOME MATURATION FACTOR RIMM"/>
    <property type="match status" value="1"/>
</dbReference>
<dbReference type="Pfam" id="PF05239">
    <property type="entry name" value="PRC"/>
    <property type="match status" value="1"/>
</dbReference>
<dbReference type="Pfam" id="PF01782">
    <property type="entry name" value="RimM"/>
    <property type="match status" value="1"/>
</dbReference>
<dbReference type="SUPFAM" id="SSF50346">
    <property type="entry name" value="PRC-barrel domain"/>
    <property type="match status" value="1"/>
</dbReference>
<dbReference type="SUPFAM" id="SSF50447">
    <property type="entry name" value="Translation proteins"/>
    <property type="match status" value="1"/>
</dbReference>